<gene>
    <name evidence="1" type="primary">erpA</name>
    <name type="ordered locus">BURPS668_3376</name>
</gene>
<feature type="chain" id="PRO_0000311464" description="Putative iron-sulfur cluster insertion protein ErpA">
    <location>
        <begin position="1"/>
        <end position="122"/>
    </location>
</feature>
<feature type="binding site" evidence="1">
    <location>
        <position position="50"/>
    </location>
    <ligand>
        <name>iron-sulfur cluster</name>
        <dbReference type="ChEBI" id="CHEBI:30408"/>
    </ligand>
</feature>
<feature type="binding site" evidence="1">
    <location>
        <position position="114"/>
    </location>
    <ligand>
        <name>iron-sulfur cluster</name>
        <dbReference type="ChEBI" id="CHEBI:30408"/>
    </ligand>
</feature>
<feature type="binding site" evidence="1">
    <location>
        <position position="116"/>
    </location>
    <ligand>
        <name>iron-sulfur cluster</name>
        <dbReference type="ChEBI" id="CHEBI:30408"/>
    </ligand>
</feature>
<keyword id="KW-0408">Iron</keyword>
<keyword id="KW-0411">Iron-sulfur</keyword>
<keyword id="KW-0479">Metal-binding</keyword>
<evidence type="ECO:0000255" key="1">
    <source>
        <dbReference type="HAMAP-Rule" id="MF_01380"/>
    </source>
</evidence>
<sequence length="122" mass="13093">MNAVTESAATTEMPAPFVFTDAAADKVKQLIDEEGNPDLKLRVFVQGGGCSGFQYGFTFDEEVNEDDTVLNKNGVVLLVDAMSYQYLVGAEIDYKDDLNGAQFVIKNPNATTTCGCGSSFSV</sequence>
<comment type="function">
    <text evidence="1">Required for insertion of 4Fe-4S clusters.</text>
</comment>
<comment type="cofactor">
    <cofactor evidence="1">
        <name>iron-sulfur cluster</name>
        <dbReference type="ChEBI" id="CHEBI:30408"/>
    </cofactor>
    <text evidence="1">Binds 1 iron-sulfur cluster per subunit.</text>
</comment>
<comment type="subunit">
    <text evidence="1">Homodimer.</text>
</comment>
<comment type="similarity">
    <text evidence="1">Belongs to the HesB/IscA family.</text>
</comment>
<name>ERPA_BURP6</name>
<protein>
    <recommendedName>
        <fullName evidence="1">Putative iron-sulfur cluster insertion protein ErpA</fullName>
    </recommendedName>
</protein>
<accession>A3NDG6</accession>
<dbReference type="EMBL" id="CP000570">
    <property type="protein sequence ID" value="ABN82702.1"/>
    <property type="molecule type" value="Genomic_DNA"/>
</dbReference>
<dbReference type="RefSeq" id="WP_004194247.1">
    <property type="nucleotide sequence ID" value="NC_009074.1"/>
</dbReference>
<dbReference type="SMR" id="A3NDG6"/>
<dbReference type="GeneID" id="93061505"/>
<dbReference type="KEGG" id="bpd:BURPS668_3376"/>
<dbReference type="HOGENOM" id="CLU_069054_5_3_4"/>
<dbReference type="GO" id="GO:0051537">
    <property type="term" value="F:2 iron, 2 sulfur cluster binding"/>
    <property type="evidence" value="ECO:0007669"/>
    <property type="project" value="UniProtKB-ARBA"/>
</dbReference>
<dbReference type="GO" id="GO:0051539">
    <property type="term" value="F:4 iron, 4 sulfur cluster binding"/>
    <property type="evidence" value="ECO:0007669"/>
    <property type="project" value="TreeGrafter"/>
</dbReference>
<dbReference type="GO" id="GO:0005506">
    <property type="term" value="F:iron ion binding"/>
    <property type="evidence" value="ECO:0007669"/>
    <property type="project" value="UniProtKB-UniRule"/>
</dbReference>
<dbReference type="GO" id="GO:0016226">
    <property type="term" value="P:iron-sulfur cluster assembly"/>
    <property type="evidence" value="ECO:0007669"/>
    <property type="project" value="UniProtKB-UniRule"/>
</dbReference>
<dbReference type="FunFam" id="2.60.300.12:FF:000002">
    <property type="entry name" value="Iron-sulfur cluster insertion protein ErpA"/>
    <property type="match status" value="1"/>
</dbReference>
<dbReference type="Gene3D" id="2.60.300.12">
    <property type="entry name" value="HesB-like domain"/>
    <property type="match status" value="1"/>
</dbReference>
<dbReference type="HAMAP" id="MF_01380">
    <property type="entry name" value="Fe_S_insert_ErpA"/>
    <property type="match status" value="1"/>
</dbReference>
<dbReference type="InterPro" id="IPR000361">
    <property type="entry name" value="FeS_biogenesis"/>
</dbReference>
<dbReference type="InterPro" id="IPR016092">
    <property type="entry name" value="FeS_cluster_insertion"/>
</dbReference>
<dbReference type="InterPro" id="IPR017870">
    <property type="entry name" value="FeS_cluster_insertion_CS"/>
</dbReference>
<dbReference type="InterPro" id="IPR023063">
    <property type="entry name" value="FeS_cluster_insertion_RrpA"/>
</dbReference>
<dbReference type="InterPro" id="IPR035903">
    <property type="entry name" value="HesB-like_dom_sf"/>
</dbReference>
<dbReference type="NCBIfam" id="TIGR00049">
    <property type="entry name" value="iron-sulfur cluster assembly accessory protein"/>
    <property type="match status" value="1"/>
</dbReference>
<dbReference type="NCBIfam" id="NF010147">
    <property type="entry name" value="PRK13623.1"/>
    <property type="match status" value="1"/>
</dbReference>
<dbReference type="PANTHER" id="PTHR43011">
    <property type="entry name" value="IRON-SULFUR CLUSTER ASSEMBLY 2 HOMOLOG, MITOCHONDRIAL"/>
    <property type="match status" value="1"/>
</dbReference>
<dbReference type="PANTHER" id="PTHR43011:SF1">
    <property type="entry name" value="IRON-SULFUR CLUSTER ASSEMBLY 2 HOMOLOG, MITOCHONDRIAL"/>
    <property type="match status" value="1"/>
</dbReference>
<dbReference type="Pfam" id="PF01521">
    <property type="entry name" value="Fe-S_biosyn"/>
    <property type="match status" value="1"/>
</dbReference>
<dbReference type="SUPFAM" id="SSF89360">
    <property type="entry name" value="HesB-like domain"/>
    <property type="match status" value="1"/>
</dbReference>
<dbReference type="PROSITE" id="PS01152">
    <property type="entry name" value="HESB"/>
    <property type="match status" value="1"/>
</dbReference>
<reference key="1">
    <citation type="journal article" date="2010" name="Genome Biol. Evol.">
        <title>Continuing evolution of Burkholderia mallei through genome reduction and large-scale rearrangements.</title>
        <authorList>
            <person name="Losada L."/>
            <person name="Ronning C.M."/>
            <person name="DeShazer D."/>
            <person name="Woods D."/>
            <person name="Fedorova N."/>
            <person name="Kim H.S."/>
            <person name="Shabalina S.A."/>
            <person name="Pearson T.R."/>
            <person name="Brinkac L."/>
            <person name="Tan P."/>
            <person name="Nandi T."/>
            <person name="Crabtree J."/>
            <person name="Badger J."/>
            <person name="Beckstrom-Sternberg S."/>
            <person name="Saqib M."/>
            <person name="Schutzer S.E."/>
            <person name="Keim P."/>
            <person name="Nierman W.C."/>
        </authorList>
    </citation>
    <scope>NUCLEOTIDE SEQUENCE [LARGE SCALE GENOMIC DNA]</scope>
    <source>
        <strain>668</strain>
    </source>
</reference>
<proteinExistence type="inferred from homology"/>
<organism>
    <name type="scientific">Burkholderia pseudomallei (strain 668)</name>
    <dbReference type="NCBI Taxonomy" id="320373"/>
    <lineage>
        <taxon>Bacteria</taxon>
        <taxon>Pseudomonadati</taxon>
        <taxon>Pseudomonadota</taxon>
        <taxon>Betaproteobacteria</taxon>
        <taxon>Burkholderiales</taxon>
        <taxon>Burkholderiaceae</taxon>
        <taxon>Burkholderia</taxon>
        <taxon>pseudomallei group</taxon>
    </lineage>
</organism>